<reference key="1">
    <citation type="journal article" date="2004" name="Nat. Genet.">
        <title>Evidence in the Legionella pneumophila genome for exploitation of host cell functions and high genome plasticity.</title>
        <authorList>
            <person name="Cazalet C."/>
            <person name="Rusniok C."/>
            <person name="Brueggemann H."/>
            <person name="Zidane N."/>
            <person name="Magnier A."/>
            <person name="Ma L."/>
            <person name="Tichit M."/>
            <person name="Jarraud S."/>
            <person name="Bouchier C."/>
            <person name="Vandenesch F."/>
            <person name="Kunst F."/>
            <person name="Etienne J."/>
            <person name="Glaser P."/>
            <person name="Buchrieser C."/>
        </authorList>
    </citation>
    <scope>NUCLEOTIDE SEQUENCE [LARGE SCALE GENOMIC DNA]</scope>
    <source>
        <strain>Lens</strain>
    </source>
</reference>
<protein>
    <recommendedName>
        <fullName evidence="1">ATP-dependent lipid A-core flippase</fullName>
        <ecNumber evidence="1">7.5.2.6</ecNumber>
    </recommendedName>
    <alternativeName>
        <fullName evidence="1">Lipid A export ATP-binding/permease protein MsbA</fullName>
    </alternativeName>
</protein>
<feature type="chain" id="PRO_0000092586" description="ATP-dependent lipid A-core flippase">
    <location>
        <begin position="1"/>
        <end position="588"/>
    </location>
</feature>
<feature type="transmembrane region" description="Helical" evidence="1">
    <location>
        <begin position="23"/>
        <end position="43"/>
    </location>
</feature>
<feature type="transmembrane region" description="Helical" evidence="1">
    <location>
        <begin position="56"/>
        <end position="76"/>
    </location>
</feature>
<feature type="transmembrane region" description="Helical" evidence="1">
    <location>
        <begin position="141"/>
        <end position="161"/>
    </location>
</feature>
<feature type="transmembrane region" description="Helical" evidence="1">
    <location>
        <begin position="162"/>
        <end position="182"/>
    </location>
</feature>
<feature type="transmembrane region" description="Helical" evidence="1">
    <location>
        <begin position="257"/>
        <end position="277"/>
    </location>
</feature>
<feature type="transmembrane region" description="Helical" evidence="1">
    <location>
        <begin position="278"/>
        <end position="298"/>
    </location>
</feature>
<feature type="domain" description="ABC transmembrane type-1" evidence="1">
    <location>
        <begin position="28"/>
        <end position="310"/>
    </location>
</feature>
<feature type="domain" description="ABC transporter" evidence="1">
    <location>
        <begin position="342"/>
        <end position="576"/>
    </location>
</feature>
<feature type="binding site" evidence="1">
    <location>
        <begin position="375"/>
        <end position="382"/>
    </location>
    <ligand>
        <name>ATP</name>
        <dbReference type="ChEBI" id="CHEBI:30616"/>
    </ligand>
</feature>
<evidence type="ECO:0000255" key="1">
    <source>
        <dbReference type="HAMAP-Rule" id="MF_01703"/>
    </source>
</evidence>
<gene>
    <name evidence="1" type="primary">msbA</name>
    <name type="ordered locus">lpl1783</name>
</gene>
<name>MSBA_LEGPL</name>
<proteinExistence type="inferred from homology"/>
<sequence>MKNNLPIKSRLLYKRLLSYVKPFWPVLLLGVLANILYSGIDAGFTYMTKLFLDKSFITIDLDFVKQIPLIVLIGITLRGLVSSLGSYCMTWVARSVVKVLRQTVFSHIIHLPADYYDEATSGQLLSKILYDVEQVAQVSADALTDFIQNICLVIGLLTVMMVICWQLSLMFLLTIPFVGIIVNYTNKRVRRISHKVQKTMGEVTEIASEAIEGYRVVRIFGGERYEITKFNKATEYSRKNDMKVAISKAINVSGVQLVIAIGIAMIIMAAIHLSTVITISAGSFLAIIAAMLQLIKPMKTLTTLNATIQRGLAGAESVFNLLDLPLERNNGLILKDKIRGEIEFKHVYHAYRQGQNILHDVNFVIEAGTSVALVGHSGSGKTTIASLLPRFYELSQGMITLDGMPIQQLSLESLRKQMSLVSQNVTLFNDTLANNIAYGRFDASREQIITAAKLAYADEFIKQLPDGYDTRVGENGVLLSGGQRQRIAIARAILKDAPILILDEATSALDSESEHYIQAALEQVMNGRTTLIIAHRLSTIKHAHKIIVMQHGRIVEQGSHQELLDMDGHYAQLYKVQQFGRVNEEVVV</sequence>
<accession>Q5WVN2</accession>
<organism>
    <name type="scientific">Legionella pneumophila (strain Lens)</name>
    <dbReference type="NCBI Taxonomy" id="297245"/>
    <lineage>
        <taxon>Bacteria</taxon>
        <taxon>Pseudomonadati</taxon>
        <taxon>Pseudomonadota</taxon>
        <taxon>Gammaproteobacteria</taxon>
        <taxon>Legionellales</taxon>
        <taxon>Legionellaceae</taxon>
        <taxon>Legionella</taxon>
    </lineage>
</organism>
<keyword id="KW-0067">ATP-binding</keyword>
<keyword id="KW-0997">Cell inner membrane</keyword>
<keyword id="KW-1003">Cell membrane</keyword>
<keyword id="KW-0445">Lipid transport</keyword>
<keyword id="KW-0472">Membrane</keyword>
<keyword id="KW-0547">Nucleotide-binding</keyword>
<keyword id="KW-1278">Translocase</keyword>
<keyword id="KW-0812">Transmembrane</keyword>
<keyword id="KW-1133">Transmembrane helix</keyword>
<keyword id="KW-0813">Transport</keyword>
<dbReference type="EC" id="7.5.2.6" evidence="1"/>
<dbReference type="EMBL" id="CR628337">
    <property type="protein sequence ID" value="CAH16022.1"/>
    <property type="molecule type" value="Genomic_DNA"/>
</dbReference>
<dbReference type="RefSeq" id="WP_011215790.1">
    <property type="nucleotide sequence ID" value="NC_006369.1"/>
</dbReference>
<dbReference type="SMR" id="Q5WVN2"/>
<dbReference type="KEGG" id="lpf:lpl1783"/>
<dbReference type="LegioList" id="lpl1783"/>
<dbReference type="HOGENOM" id="CLU_000604_84_3_6"/>
<dbReference type="Proteomes" id="UP000002517">
    <property type="component" value="Chromosome"/>
</dbReference>
<dbReference type="GO" id="GO:0005886">
    <property type="term" value="C:plasma membrane"/>
    <property type="evidence" value="ECO:0007669"/>
    <property type="project" value="UniProtKB-SubCell"/>
</dbReference>
<dbReference type="GO" id="GO:0015421">
    <property type="term" value="F:ABC-type oligopeptide transporter activity"/>
    <property type="evidence" value="ECO:0007669"/>
    <property type="project" value="TreeGrafter"/>
</dbReference>
<dbReference type="GO" id="GO:0005524">
    <property type="term" value="F:ATP binding"/>
    <property type="evidence" value="ECO:0007669"/>
    <property type="project" value="UniProtKB-KW"/>
</dbReference>
<dbReference type="GO" id="GO:0016887">
    <property type="term" value="F:ATP hydrolysis activity"/>
    <property type="evidence" value="ECO:0007669"/>
    <property type="project" value="InterPro"/>
</dbReference>
<dbReference type="GO" id="GO:0034040">
    <property type="term" value="F:ATPase-coupled lipid transmembrane transporter activity"/>
    <property type="evidence" value="ECO:0007669"/>
    <property type="project" value="InterPro"/>
</dbReference>
<dbReference type="CDD" id="cd18552">
    <property type="entry name" value="ABC_6TM_MsbA_like"/>
    <property type="match status" value="1"/>
</dbReference>
<dbReference type="FunFam" id="3.40.50.300:FF:000287">
    <property type="entry name" value="Multidrug ABC transporter ATP-binding protein"/>
    <property type="match status" value="1"/>
</dbReference>
<dbReference type="Gene3D" id="1.20.1560.10">
    <property type="entry name" value="ABC transporter type 1, transmembrane domain"/>
    <property type="match status" value="1"/>
</dbReference>
<dbReference type="Gene3D" id="3.40.50.300">
    <property type="entry name" value="P-loop containing nucleotide triphosphate hydrolases"/>
    <property type="match status" value="1"/>
</dbReference>
<dbReference type="InterPro" id="IPR003593">
    <property type="entry name" value="AAA+_ATPase"/>
</dbReference>
<dbReference type="InterPro" id="IPR011527">
    <property type="entry name" value="ABC1_TM_dom"/>
</dbReference>
<dbReference type="InterPro" id="IPR036640">
    <property type="entry name" value="ABC1_TM_sf"/>
</dbReference>
<dbReference type="InterPro" id="IPR003439">
    <property type="entry name" value="ABC_transporter-like_ATP-bd"/>
</dbReference>
<dbReference type="InterPro" id="IPR017871">
    <property type="entry name" value="ABC_transporter-like_CS"/>
</dbReference>
<dbReference type="InterPro" id="IPR011917">
    <property type="entry name" value="ABC_transpr_lipidA"/>
</dbReference>
<dbReference type="InterPro" id="IPR027417">
    <property type="entry name" value="P-loop_NTPase"/>
</dbReference>
<dbReference type="InterPro" id="IPR039421">
    <property type="entry name" value="Type_1_exporter"/>
</dbReference>
<dbReference type="NCBIfam" id="TIGR02203">
    <property type="entry name" value="MsbA_lipidA"/>
    <property type="match status" value="1"/>
</dbReference>
<dbReference type="PANTHER" id="PTHR43394:SF1">
    <property type="entry name" value="ATP-BINDING CASSETTE SUB-FAMILY B MEMBER 10, MITOCHONDRIAL"/>
    <property type="match status" value="1"/>
</dbReference>
<dbReference type="PANTHER" id="PTHR43394">
    <property type="entry name" value="ATP-DEPENDENT PERMEASE MDL1, MITOCHONDRIAL"/>
    <property type="match status" value="1"/>
</dbReference>
<dbReference type="Pfam" id="PF00664">
    <property type="entry name" value="ABC_membrane"/>
    <property type="match status" value="1"/>
</dbReference>
<dbReference type="Pfam" id="PF00005">
    <property type="entry name" value="ABC_tran"/>
    <property type="match status" value="1"/>
</dbReference>
<dbReference type="SMART" id="SM00382">
    <property type="entry name" value="AAA"/>
    <property type="match status" value="1"/>
</dbReference>
<dbReference type="SUPFAM" id="SSF90123">
    <property type="entry name" value="ABC transporter transmembrane region"/>
    <property type="match status" value="1"/>
</dbReference>
<dbReference type="SUPFAM" id="SSF52540">
    <property type="entry name" value="P-loop containing nucleoside triphosphate hydrolases"/>
    <property type="match status" value="1"/>
</dbReference>
<dbReference type="PROSITE" id="PS50929">
    <property type="entry name" value="ABC_TM1F"/>
    <property type="match status" value="1"/>
</dbReference>
<dbReference type="PROSITE" id="PS00211">
    <property type="entry name" value="ABC_TRANSPORTER_1"/>
    <property type="match status" value="1"/>
</dbReference>
<dbReference type="PROSITE" id="PS50893">
    <property type="entry name" value="ABC_TRANSPORTER_2"/>
    <property type="match status" value="1"/>
</dbReference>
<dbReference type="PROSITE" id="PS51239">
    <property type="entry name" value="MSBA"/>
    <property type="match status" value="1"/>
</dbReference>
<comment type="function">
    <text evidence="1">Involved in lipopolysaccharide (LPS) biosynthesis. Translocates lipid A-core from the inner to the outer leaflet of the inner membrane. Transmembrane domains (TMD) form a pore in the inner membrane and the ATP-binding domain (NBD) is responsible for energy generation.</text>
</comment>
<comment type="catalytic activity">
    <reaction evidence="1">
        <text>ATP + H2O + lipid A-core oligosaccharideSide 1 = ADP + phosphate + lipid A-core oligosaccharideSide 2.</text>
        <dbReference type="EC" id="7.5.2.6"/>
    </reaction>
</comment>
<comment type="subunit">
    <text evidence="1">Homodimer.</text>
</comment>
<comment type="subcellular location">
    <subcellularLocation>
        <location evidence="1">Cell inner membrane</location>
        <topology evidence="1">Multi-pass membrane protein</topology>
    </subcellularLocation>
</comment>
<comment type="domain">
    <text evidence="1">In MsbA the ATP-binding domain (NBD) and the transmembrane domain (TMD) are fused.</text>
</comment>
<comment type="similarity">
    <text evidence="1">Belongs to the ABC transporter superfamily. Lipid exporter (TC 3.A.1.106) family.</text>
</comment>